<protein>
    <recommendedName>
        <fullName evidence="4">Type II methyltransferase M.AluI</fullName>
        <shortName evidence="5">M.AluI</shortName>
        <ecNumber>2.1.1.37</ecNumber>
    </recommendedName>
    <alternativeName>
        <fullName>Cytosine-specific methyltransferase AluI</fullName>
    </alternativeName>
    <alternativeName>
        <fullName>Modification methylase AluI</fullName>
    </alternativeName>
</protein>
<organism>
    <name type="scientific">Cellulosimicrobium cellulans</name>
    <name type="common">Arthrobacter luteus</name>
    <dbReference type="NCBI Taxonomy" id="1710"/>
    <lineage>
        <taxon>Bacteria</taxon>
        <taxon>Bacillati</taxon>
        <taxon>Actinomycetota</taxon>
        <taxon>Actinomycetes</taxon>
        <taxon>Micrococcales</taxon>
        <taxon>Promicromonosporaceae</taxon>
        <taxon>Cellulosimicrobium</taxon>
    </lineage>
</organism>
<evidence type="ECO:0000255" key="1">
    <source>
        <dbReference type="PROSITE-ProRule" id="PRU01016"/>
    </source>
</evidence>
<evidence type="ECO:0000255" key="2">
    <source>
        <dbReference type="PROSITE-ProRule" id="PRU10018"/>
    </source>
</evidence>
<evidence type="ECO:0000269" key="3">
    <source>
    </source>
</evidence>
<evidence type="ECO:0000303" key="4">
    <source>
    </source>
</evidence>
<evidence type="ECO:0000303" key="5">
    <source>
    </source>
</evidence>
<accession>P31974</accession>
<name>MTA1_CELCE</name>
<dbReference type="EC" id="2.1.1.37"/>
<dbReference type="EMBL" id="Z11841">
    <property type="protein sequence ID" value="CAA77866.1"/>
    <property type="molecule type" value="Genomic_DNA"/>
</dbReference>
<dbReference type="PIR" id="S35614">
    <property type="entry name" value="S35614"/>
</dbReference>
<dbReference type="SMR" id="P31974"/>
<dbReference type="PRO" id="PR:P31974"/>
<dbReference type="GO" id="GO:0003886">
    <property type="term" value="F:DNA (cytosine-5-)-methyltransferase activity"/>
    <property type="evidence" value="ECO:0007669"/>
    <property type="project" value="UniProtKB-EC"/>
</dbReference>
<dbReference type="GO" id="GO:0003677">
    <property type="term" value="F:DNA binding"/>
    <property type="evidence" value="ECO:0007669"/>
    <property type="project" value="UniProtKB-KW"/>
</dbReference>
<dbReference type="GO" id="GO:0009307">
    <property type="term" value="P:DNA restriction-modification system"/>
    <property type="evidence" value="ECO:0007669"/>
    <property type="project" value="UniProtKB-KW"/>
</dbReference>
<dbReference type="GO" id="GO:0032259">
    <property type="term" value="P:methylation"/>
    <property type="evidence" value="ECO:0007669"/>
    <property type="project" value="UniProtKB-KW"/>
</dbReference>
<dbReference type="CDD" id="cd00315">
    <property type="entry name" value="Cyt_C5_DNA_methylase"/>
    <property type="match status" value="1"/>
</dbReference>
<dbReference type="Gene3D" id="3.90.120.10">
    <property type="entry name" value="DNA Methylase, subunit A, domain 2"/>
    <property type="match status" value="1"/>
</dbReference>
<dbReference type="Gene3D" id="3.40.50.150">
    <property type="entry name" value="Vaccinia Virus protein VP39"/>
    <property type="match status" value="1"/>
</dbReference>
<dbReference type="InterPro" id="IPR050750">
    <property type="entry name" value="C5-MTase"/>
</dbReference>
<dbReference type="InterPro" id="IPR018117">
    <property type="entry name" value="C5_DNA_meth_AS"/>
</dbReference>
<dbReference type="InterPro" id="IPR001525">
    <property type="entry name" value="C5_MeTfrase"/>
</dbReference>
<dbReference type="InterPro" id="IPR029063">
    <property type="entry name" value="SAM-dependent_MTases_sf"/>
</dbReference>
<dbReference type="NCBIfam" id="TIGR00675">
    <property type="entry name" value="dcm"/>
    <property type="match status" value="1"/>
</dbReference>
<dbReference type="PANTHER" id="PTHR46098">
    <property type="entry name" value="TRNA (CYTOSINE(38)-C(5))-METHYLTRANSFERASE"/>
    <property type="match status" value="1"/>
</dbReference>
<dbReference type="PANTHER" id="PTHR46098:SF1">
    <property type="entry name" value="TRNA (CYTOSINE(38)-C(5))-METHYLTRANSFERASE"/>
    <property type="match status" value="1"/>
</dbReference>
<dbReference type="Pfam" id="PF00145">
    <property type="entry name" value="DNA_methylase"/>
    <property type="match status" value="1"/>
</dbReference>
<dbReference type="PRINTS" id="PR00105">
    <property type="entry name" value="C5METTRFRASE"/>
</dbReference>
<dbReference type="SUPFAM" id="SSF53335">
    <property type="entry name" value="S-adenosyl-L-methionine-dependent methyltransferases"/>
    <property type="match status" value="1"/>
</dbReference>
<dbReference type="PROSITE" id="PS00094">
    <property type="entry name" value="C5_MTASE_1"/>
    <property type="match status" value="1"/>
</dbReference>
<dbReference type="PROSITE" id="PS51679">
    <property type="entry name" value="SAM_MT_C5"/>
    <property type="match status" value="1"/>
</dbReference>
<proteinExistence type="inferred from homology"/>
<sequence>MSKANAKYSFVDLFAGIGGFHAALAATGGVCEYAVEIDREAAAVYERNWNKPALGDITDDANDEGVTLRGYDGPIDVLTGGFPCQPFSKSGAQHGMAETRGTLFWNIARIIEEREPTVLILENVRNLVGPRHRHEWLTIIETLRFFGYEVSGAPAIFSPHLLPAWMGGTPQVRERVFITATLVPERMRDERIPRTETGEIDAEAIGPKPVATMNDRFPIKKGGTELFHPGDRKSGWNLLTSGIIREGDPEPSNVDLRLTETETLWIDAWDDLESTIRRATGRPLEGFPYWADSWTDFRELSRLVVIRGFQAPEREVVGDRKRYVARTDMPEGFVPASVTRPAIDETLPAWKQSHLRRNYDFFERHFAEVVAWAYRWGVYTDLFPASRRKLEWQAQDAPRLWDTVMHFRPSGIRAKRPTYLPALVAITQTSIVGPLERRLSPRETARLQGLPEWFDFGEQRAAATYKQMGNGVNVGVVRHILREHVRRDRALLKLTPAGQRIINAVLADEPDATVGALGAAE</sequence>
<gene>
    <name evidence="5" type="primary">aluIM</name>
</gene>
<feature type="chain" id="PRO_0000087858" description="Type II methyltransferase M.AluI">
    <location>
        <begin position="1"/>
        <end position="521"/>
    </location>
</feature>
<feature type="domain" description="SAM-dependent MTase C5-type" evidence="1">
    <location>
        <begin position="8"/>
        <end position="491"/>
    </location>
</feature>
<feature type="active site" evidence="1 2">
    <location>
        <position position="84"/>
    </location>
</feature>
<reference key="1">
    <citation type="journal article" date="1993" name="Nucleic Acids Res.">
        <title>The M.AluI DNA-(cytosine C5)-methyltransferase has an unusually large, partially dispensable, variable region.</title>
        <authorList>
            <person name="Zhang B."/>
            <person name="Tao T."/>
            <person name="Wilson G.G."/>
            <person name="Blumenthal R.M."/>
        </authorList>
    </citation>
    <scope>NUCLEOTIDE SEQUENCE [GENOMIC DNA]</scope>
    <scope>FUNCTION</scope>
    <scope>DOMAIN</scope>
    <source>
        <strain>ATCC 21606 / DSM 20424 / 73-14</strain>
    </source>
</reference>
<reference key="2">
    <citation type="journal article" date="2003" name="Nucleic Acids Res.">
        <title>A nomenclature for restriction enzymes, DNA methyltransferases, homing endonucleases and their genes.</title>
        <authorList>
            <person name="Roberts R.J."/>
            <person name="Belfort M."/>
            <person name="Bestor T."/>
            <person name="Bhagwat A.S."/>
            <person name="Bickle T.A."/>
            <person name="Bitinaite J."/>
            <person name="Blumenthal R.M."/>
            <person name="Degtyarev S.K."/>
            <person name="Dryden D.T."/>
            <person name="Dybvig K."/>
            <person name="Firman K."/>
            <person name="Gromova E.S."/>
            <person name="Gumport R.I."/>
            <person name="Halford S.E."/>
            <person name="Hattman S."/>
            <person name="Heitman J."/>
            <person name="Hornby D.P."/>
            <person name="Janulaitis A."/>
            <person name="Jeltsch A."/>
            <person name="Josephsen J."/>
            <person name="Kiss A."/>
            <person name="Klaenhammer T.R."/>
            <person name="Kobayashi I."/>
            <person name="Kong H."/>
            <person name="Krueger D.H."/>
            <person name="Lacks S."/>
            <person name="Marinus M.G."/>
            <person name="Miyahara M."/>
            <person name="Morgan R.D."/>
            <person name="Murray N.E."/>
            <person name="Nagaraja V."/>
            <person name="Piekarowicz A."/>
            <person name="Pingoud A."/>
            <person name="Raleigh E."/>
            <person name="Rao D.N."/>
            <person name="Reich N."/>
            <person name="Repin V.E."/>
            <person name="Selker E.U."/>
            <person name="Shaw P.C."/>
            <person name="Stein D.C."/>
            <person name="Stoddard B.L."/>
            <person name="Szybalski W."/>
            <person name="Trautner T.A."/>
            <person name="Van Etten J.L."/>
            <person name="Vitor J.M."/>
            <person name="Wilson G.G."/>
            <person name="Xu S.Y."/>
        </authorList>
    </citation>
    <scope>NOMENCLATURE</scope>
</reference>
<comment type="function">
    <text evidence="3 4">A methylase, recognizes the double-stranded sequence 5'-AGCT-3', methylates C-3 on both strands, and protects the DNA from cleavage by the AluI endonuclease.</text>
</comment>
<comment type="catalytic activity">
    <reaction evidence="2">
        <text>a 2'-deoxycytidine in DNA + S-adenosyl-L-methionine = a 5-methyl-2'-deoxycytidine in DNA + S-adenosyl-L-homocysteine + H(+)</text>
        <dbReference type="Rhea" id="RHEA:13681"/>
        <dbReference type="Rhea" id="RHEA-COMP:11369"/>
        <dbReference type="Rhea" id="RHEA-COMP:11370"/>
        <dbReference type="ChEBI" id="CHEBI:15378"/>
        <dbReference type="ChEBI" id="CHEBI:57856"/>
        <dbReference type="ChEBI" id="CHEBI:59789"/>
        <dbReference type="ChEBI" id="CHEBI:85452"/>
        <dbReference type="ChEBI" id="CHEBI:85454"/>
        <dbReference type="EC" id="2.1.1.37"/>
    </reaction>
</comment>
<comment type="domain">
    <text evidence="3">Replacement of residues 191-272 by a single Ser residue still protects DNA against digestion by AluI.</text>
</comment>
<comment type="similarity">
    <text evidence="1">Belongs to the class I-like SAM-binding methyltransferase superfamily. C5-methyltransferase family.</text>
</comment>
<keyword id="KW-0238">DNA-binding</keyword>
<keyword id="KW-0489">Methyltransferase</keyword>
<keyword id="KW-0680">Restriction system</keyword>
<keyword id="KW-0949">S-adenosyl-L-methionine</keyword>
<keyword id="KW-0808">Transferase</keyword>